<feature type="chain" id="PRO_0000122438" description="M-phase phosphoprotein 6">
    <location>
        <begin position="1"/>
        <end position="161"/>
    </location>
</feature>
<feature type="short sequence motif" description="Nuclear localization signal" evidence="2">
    <location>
        <begin position="117"/>
        <end position="134"/>
    </location>
</feature>
<feature type="modified residue" description="Phosphoserine" evidence="1">
    <location>
        <position position="111"/>
    </location>
</feature>
<feature type="cross-link" description="Glycyl lysine isopeptide (Lys-Gly) (interchain with G-Cter in SUMO2)" evidence="1">
    <location>
        <position position="37"/>
    </location>
</feature>
<feature type="cross-link" description="Glycyl lysine isopeptide (Lys-Gly) (interchain with G-Cter in SUMO2)" evidence="1">
    <location>
        <position position="86"/>
    </location>
</feature>
<feature type="cross-link" description="Glycyl lysine isopeptide (Lys-Gly) (interchain with G-Cter in SUMO2)" evidence="1">
    <location>
        <position position="128"/>
    </location>
</feature>
<feature type="cross-link" description="Glycyl lysine isopeptide (Lys-Gly) (interchain with G-Cter in SUMO2)" evidence="1">
    <location>
        <position position="151"/>
    </location>
</feature>
<feature type="cross-link" description="Glycyl lysine isopeptide (Lys-Gly) (interchain with G-Cter in SUMO2)" evidence="1">
    <location>
        <position position="154"/>
    </location>
</feature>
<gene>
    <name evidence="4" type="primary">Mphosph6</name>
</gene>
<reference key="1">
    <citation type="journal article" date="2005" name="Science">
        <title>The transcriptional landscape of the mammalian genome.</title>
        <authorList>
            <person name="Carninci P."/>
            <person name="Kasukawa T."/>
            <person name="Katayama S."/>
            <person name="Gough J."/>
            <person name="Frith M.C."/>
            <person name="Maeda N."/>
            <person name="Oyama R."/>
            <person name="Ravasi T."/>
            <person name="Lenhard B."/>
            <person name="Wells C."/>
            <person name="Kodzius R."/>
            <person name="Shimokawa K."/>
            <person name="Bajic V.B."/>
            <person name="Brenner S.E."/>
            <person name="Batalov S."/>
            <person name="Forrest A.R."/>
            <person name="Zavolan M."/>
            <person name="Davis M.J."/>
            <person name="Wilming L.G."/>
            <person name="Aidinis V."/>
            <person name="Allen J.E."/>
            <person name="Ambesi-Impiombato A."/>
            <person name="Apweiler R."/>
            <person name="Aturaliya R.N."/>
            <person name="Bailey T.L."/>
            <person name="Bansal M."/>
            <person name="Baxter L."/>
            <person name="Beisel K.W."/>
            <person name="Bersano T."/>
            <person name="Bono H."/>
            <person name="Chalk A.M."/>
            <person name="Chiu K.P."/>
            <person name="Choudhary V."/>
            <person name="Christoffels A."/>
            <person name="Clutterbuck D.R."/>
            <person name="Crowe M.L."/>
            <person name="Dalla E."/>
            <person name="Dalrymple B.P."/>
            <person name="de Bono B."/>
            <person name="Della Gatta G."/>
            <person name="di Bernardo D."/>
            <person name="Down T."/>
            <person name="Engstrom P."/>
            <person name="Fagiolini M."/>
            <person name="Faulkner G."/>
            <person name="Fletcher C.F."/>
            <person name="Fukushima T."/>
            <person name="Furuno M."/>
            <person name="Futaki S."/>
            <person name="Gariboldi M."/>
            <person name="Georgii-Hemming P."/>
            <person name="Gingeras T.R."/>
            <person name="Gojobori T."/>
            <person name="Green R.E."/>
            <person name="Gustincich S."/>
            <person name="Harbers M."/>
            <person name="Hayashi Y."/>
            <person name="Hensch T.K."/>
            <person name="Hirokawa N."/>
            <person name="Hill D."/>
            <person name="Huminiecki L."/>
            <person name="Iacono M."/>
            <person name="Ikeo K."/>
            <person name="Iwama A."/>
            <person name="Ishikawa T."/>
            <person name="Jakt M."/>
            <person name="Kanapin A."/>
            <person name="Katoh M."/>
            <person name="Kawasawa Y."/>
            <person name="Kelso J."/>
            <person name="Kitamura H."/>
            <person name="Kitano H."/>
            <person name="Kollias G."/>
            <person name="Krishnan S.P."/>
            <person name="Kruger A."/>
            <person name="Kummerfeld S.K."/>
            <person name="Kurochkin I.V."/>
            <person name="Lareau L.F."/>
            <person name="Lazarevic D."/>
            <person name="Lipovich L."/>
            <person name="Liu J."/>
            <person name="Liuni S."/>
            <person name="McWilliam S."/>
            <person name="Madan Babu M."/>
            <person name="Madera M."/>
            <person name="Marchionni L."/>
            <person name="Matsuda H."/>
            <person name="Matsuzawa S."/>
            <person name="Miki H."/>
            <person name="Mignone F."/>
            <person name="Miyake S."/>
            <person name="Morris K."/>
            <person name="Mottagui-Tabar S."/>
            <person name="Mulder N."/>
            <person name="Nakano N."/>
            <person name="Nakauchi H."/>
            <person name="Ng P."/>
            <person name="Nilsson R."/>
            <person name="Nishiguchi S."/>
            <person name="Nishikawa S."/>
            <person name="Nori F."/>
            <person name="Ohara O."/>
            <person name="Okazaki Y."/>
            <person name="Orlando V."/>
            <person name="Pang K.C."/>
            <person name="Pavan W.J."/>
            <person name="Pavesi G."/>
            <person name="Pesole G."/>
            <person name="Petrovsky N."/>
            <person name="Piazza S."/>
            <person name="Reed J."/>
            <person name="Reid J.F."/>
            <person name="Ring B.Z."/>
            <person name="Ringwald M."/>
            <person name="Rost B."/>
            <person name="Ruan Y."/>
            <person name="Salzberg S.L."/>
            <person name="Sandelin A."/>
            <person name="Schneider C."/>
            <person name="Schoenbach C."/>
            <person name="Sekiguchi K."/>
            <person name="Semple C.A."/>
            <person name="Seno S."/>
            <person name="Sessa L."/>
            <person name="Sheng Y."/>
            <person name="Shibata Y."/>
            <person name="Shimada H."/>
            <person name="Shimada K."/>
            <person name="Silva D."/>
            <person name="Sinclair B."/>
            <person name="Sperling S."/>
            <person name="Stupka E."/>
            <person name="Sugiura K."/>
            <person name="Sultana R."/>
            <person name="Takenaka Y."/>
            <person name="Taki K."/>
            <person name="Tammoja K."/>
            <person name="Tan S.L."/>
            <person name="Tang S."/>
            <person name="Taylor M.S."/>
            <person name="Tegner J."/>
            <person name="Teichmann S.A."/>
            <person name="Ueda H.R."/>
            <person name="van Nimwegen E."/>
            <person name="Verardo R."/>
            <person name="Wei C.L."/>
            <person name="Yagi K."/>
            <person name="Yamanishi H."/>
            <person name="Zabarovsky E."/>
            <person name="Zhu S."/>
            <person name="Zimmer A."/>
            <person name="Hide W."/>
            <person name="Bult C."/>
            <person name="Grimmond S.M."/>
            <person name="Teasdale R.D."/>
            <person name="Liu E.T."/>
            <person name="Brusic V."/>
            <person name="Quackenbush J."/>
            <person name="Wahlestedt C."/>
            <person name="Mattick J.S."/>
            <person name="Hume D.A."/>
            <person name="Kai C."/>
            <person name="Sasaki D."/>
            <person name="Tomaru Y."/>
            <person name="Fukuda S."/>
            <person name="Kanamori-Katayama M."/>
            <person name="Suzuki M."/>
            <person name="Aoki J."/>
            <person name="Arakawa T."/>
            <person name="Iida J."/>
            <person name="Imamura K."/>
            <person name="Itoh M."/>
            <person name="Kato T."/>
            <person name="Kawaji H."/>
            <person name="Kawagashira N."/>
            <person name="Kawashima T."/>
            <person name="Kojima M."/>
            <person name="Kondo S."/>
            <person name="Konno H."/>
            <person name="Nakano K."/>
            <person name="Ninomiya N."/>
            <person name="Nishio T."/>
            <person name="Okada M."/>
            <person name="Plessy C."/>
            <person name="Shibata K."/>
            <person name="Shiraki T."/>
            <person name="Suzuki S."/>
            <person name="Tagami M."/>
            <person name="Waki K."/>
            <person name="Watahiki A."/>
            <person name="Okamura-Oho Y."/>
            <person name="Suzuki H."/>
            <person name="Kawai J."/>
            <person name="Hayashizaki Y."/>
        </authorList>
    </citation>
    <scope>NUCLEOTIDE SEQUENCE [LARGE SCALE MRNA]</scope>
    <source>
        <strain>C57BL/6J</strain>
        <tissue>Embryo</tissue>
    </source>
</reference>
<reference key="2">
    <citation type="journal article" date="2004" name="Genome Res.">
        <title>The status, quality, and expansion of the NIH full-length cDNA project: the Mammalian Gene Collection (MGC).</title>
        <authorList>
            <consortium name="The MGC Project Team"/>
        </authorList>
    </citation>
    <scope>NUCLEOTIDE SEQUENCE [LARGE SCALE MRNA]</scope>
    <source>
        <strain>FVB/N</strain>
        <tissue>Mammary gland</tissue>
    </source>
</reference>
<reference key="3">
    <citation type="submission" date="2009-01" db="UniProtKB">
        <authorList>
            <person name="Lubec G."/>
            <person name="Sunyer B."/>
            <person name="Chen W.-Q."/>
        </authorList>
    </citation>
    <scope>PROTEIN SEQUENCE OF 16-21</scope>
    <scope>IDENTIFICATION BY MASS SPECTROMETRY</scope>
    <source>
        <strain>OF1</strain>
        <tissue>Hippocampus</tissue>
    </source>
</reference>
<dbReference type="EMBL" id="AK003245">
    <property type="protein sequence ID" value="BAB22664.1"/>
    <property type="molecule type" value="mRNA"/>
</dbReference>
<dbReference type="EMBL" id="BC008161">
    <property type="protein sequence ID" value="AAH08161.1"/>
    <property type="molecule type" value="mRNA"/>
</dbReference>
<dbReference type="CCDS" id="CCDS22702.1"/>
<dbReference type="RefSeq" id="NP_081034.1">
    <property type="nucleotide sequence ID" value="NM_026758.4"/>
</dbReference>
<dbReference type="SMR" id="Q9D1Q1"/>
<dbReference type="FunCoup" id="Q9D1Q1">
    <property type="interactions" value="3334"/>
</dbReference>
<dbReference type="STRING" id="10090.ENSMUSP00000034303"/>
<dbReference type="iPTMnet" id="Q9D1Q1"/>
<dbReference type="PhosphoSitePlus" id="Q9D1Q1"/>
<dbReference type="PaxDb" id="10090-ENSMUSP00000034303"/>
<dbReference type="PeptideAtlas" id="Q9D1Q1"/>
<dbReference type="ProteomicsDB" id="252607"/>
<dbReference type="Pumba" id="Q9D1Q1"/>
<dbReference type="Antibodypedia" id="3289">
    <property type="antibodies" value="173 antibodies from 26 providers"/>
</dbReference>
<dbReference type="DNASU" id="68533"/>
<dbReference type="Ensembl" id="ENSMUST00000034303.3">
    <property type="protein sequence ID" value="ENSMUSP00000034303.2"/>
    <property type="gene ID" value="ENSMUSG00000031843.3"/>
</dbReference>
<dbReference type="GeneID" id="68533"/>
<dbReference type="KEGG" id="mmu:68533"/>
<dbReference type="UCSC" id="uc009npg.1">
    <property type="organism name" value="mouse"/>
</dbReference>
<dbReference type="AGR" id="MGI:1915783"/>
<dbReference type="CTD" id="10200"/>
<dbReference type="MGI" id="MGI:1915783">
    <property type="gene designation" value="Mphosph6"/>
</dbReference>
<dbReference type="VEuPathDB" id="HostDB:ENSMUSG00000031843"/>
<dbReference type="eggNOG" id="KOG4531">
    <property type="taxonomic scope" value="Eukaryota"/>
</dbReference>
<dbReference type="GeneTree" id="ENSGT00390000009212"/>
<dbReference type="HOGENOM" id="CLU_139852_1_0_1"/>
<dbReference type="InParanoid" id="Q9D1Q1"/>
<dbReference type="OMA" id="GSMKKKF"/>
<dbReference type="OrthoDB" id="20403at2759"/>
<dbReference type="PhylomeDB" id="Q9D1Q1"/>
<dbReference type="TreeFam" id="TF323810"/>
<dbReference type="Reactome" id="R-MMU-6791226">
    <property type="pathway name" value="Major pathway of rRNA processing in the nucleolus and cytosol"/>
</dbReference>
<dbReference type="BioGRID-ORCS" id="68533">
    <property type="hits" value="24 hits in 78 CRISPR screens"/>
</dbReference>
<dbReference type="ChiTaRS" id="Mphosph6">
    <property type="organism name" value="mouse"/>
</dbReference>
<dbReference type="PRO" id="PR:Q9D1Q1"/>
<dbReference type="Proteomes" id="UP000000589">
    <property type="component" value="Chromosome 8"/>
</dbReference>
<dbReference type="RNAct" id="Q9D1Q1">
    <property type="molecule type" value="protein"/>
</dbReference>
<dbReference type="Bgee" id="ENSMUSG00000031843">
    <property type="expression patterns" value="Expressed in animal zygote and 257 other cell types or tissues"/>
</dbReference>
<dbReference type="GO" id="GO:0005829">
    <property type="term" value="C:cytosol"/>
    <property type="evidence" value="ECO:0007669"/>
    <property type="project" value="Ensembl"/>
</dbReference>
<dbReference type="GO" id="GO:0000178">
    <property type="term" value="C:exosome (RNase complex)"/>
    <property type="evidence" value="ECO:0000250"/>
    <property type="project" value="UniProtKB"/>
</dbReference>
<dbReference type="GO" id="GO:0000176">
    <property type="term" value="C:nuclear exosome (RNase complex)"/>
    <property type="evidence" value="ECO:0007669"/>
    <property type="project" value="Ensembl"/>
</dbReference>
<dbReference type="GO" id="GO:0005730">
    <property type="term" value="C:nucleolus"/>
    <property type="evidence" value="ECO:0007669"/>
    <property type="project" value="UniProtKB-SubCell"/>
</dbReference>
<dbReference type="GO" id="GO:0005654">
    <property type="term" value="C:nucleoplasm"/>
    <property type="evidence" value="ECO:0007669"/>
    <property type="project" value="Ensembl"/>
</dbReference>
<dbReference type="GO" id="GO:0003723">
    <property type="term" value="F:RNA binding"/>
    <property type="evidence" value="ECO:0007669"/>
    <property type="project" value="UniProtKB-KW"/>
</dbReference>
<dbReference type="GO" id="GO:0000460">
    <property type="term" value="P:maturation of 5.8S rRNA"/>
    <property type="evidence" value="ECO:0007669"/>
    <property type="project" value="Ensembl"/>
</dbReference>
<dbReference type="InterPro" id="IPR019324">
    <property type="entry name" value="MPP6"/>
</dbReference>
<dbReference type="PANTHER" id="PTHR13582">
    <property type="entry name" value="M-PHASE PHOSPHOPROTEIN 6"/>
    <property type="match status" value="1"/>
</dbReference>
<dbReference type="PANTHER" id="PTHR13582:SF0">
    <property type="entry name" value="M-PHASE PHOSPHOPROTEIN 6"/>
    <property type="match status" value="1"/>
</dbReference>
<dbReference type="Pfam" id="PF10175">
    <property type="entry name" value="MPP6"/>
    <property type="match status" value="1"/>
</dbReference>
<organism>
    <name type="scientific">Mus musculus</name>
    <name type="common">Mouse</name>
    <dbReference type="NCBI Taxonomy" id="10090"/>
    <lineage>
        <taxon>Eukaryota</taxon>
        <taxon>Metazoa</taxon>
        <taxon>Chordata</taxon>
        <taxon>Craniata</taxon>
        <taxon>Vertebrata</taxon>
        <taxon>Euteleostomi</taxon>
        <taxon>Mammalia</taxon>
        <taxon>Eutheria</taxon>
        <taxon>Euarchontoglires</taxon>
        <taxon>Glires</taxon>
        <taxon>Rodentia</taxon>
        <taxon>Myomorpha</taxon>
        <taxon>Muroidea</taxon>
        <taxon>Muridae</taxon>
        <taxon>Murinae</taxon>
        <taxon>Mus</taxon>
        <taxon>Mus</taxon>
    </lineage>
</organism>
<protein>
    <recommendedName>
        <fullName>M-phase phosphoprotein 6</fullName>
    </recommendedName>
</protein>
<proteinExistence type="evidence at protein level"/>
<evidence type="ECO:0000250" key="1">
    <source>
        <dbReference type="UniProtKB" id="Q99547"/>
    </source>
</evidence>
<evidence type="ECO:0000255" key="2"/>
<evidence type="ECO:0000305" key="3"/>
<evidence type="ECO:0000312" key="4">
    <source>
        <dbReference type="MGI" id="MGI:1915783"/>
    </source>
</evidence>
<accession>Q9D1Q1</accession>
<keyword id="KW-0963">Cytoplasm</keyword>
<keyword id="KW-0903">Direct protein sequencing</keyword>
<keyword id="KW-1017">Isopeptide bond</keyword>
<keyword id="KW-0539">Nucleus</keyword>
<keyword id="KW-0597">Phosphoprotein</keyword>
<keyword id="KW-1185">Reference proteome</keyword>
<keyword id="KW-0694">RNA-binding</keyword>
<keyword id="KW-0698">rRNA processing</keyword>
<keyword id="KW-0832">Ubl conjugation</keyword>
<comment type="function">
    <text evidence="1">RNA-binding protein that associates with the RNA exosome complex. Involved in the 3'-processing of the 7S pre-RNA to the mature 5.8S rRNA and plays a role in recruiting the RNA exosome complex to pre-rRNA; this function may include C1D.</text>
</comment>
<comment type="subunit">
    <text evidence="1">Associates with the RNA exosome complex, mediated by EXOSC3 (By similarity). Interacts with ARHGAP18 (By similarity). Interacts with exosome cofactors EXOSC10 and MTREX (By similarity).</text>
</comment>
<comment type="subcellular location">
    <subcellularLocation>
        <location evidence="1">Nucleus</location>
        <location evidence="1">Nucleolus</location>
    </subcellularLocation>
    <subcellularLocation>
        <location evidence="1">Cytoplasm</location>
    </subcellularLocation>
    <text evidence="1">Cytoplasmic in M phase.</text>
</comment>
<comment type="PTM">
    <text evidence="1">Phosphorylated in M (mitotic) phase.</text>
</comment>
<comment type="similarity">
    <text evidence="3">Belongs to the MPP6 family.</text>
</comment>
<name>MPH6_MOUSE</name>
<sequence length="161" mass="19086">MASERKTKLSKNLLRMKFMQRGLDSETKKQLEEEERKMISDEHWYLDLPELKEKESFIVEEQSFSLCEDLLYGRMSFRGFNPEVEKLMLQMNSKNRAEAAEEDETVEVDVSDEEMARRYETLVGTIGKKFVKKRDRANYEEDENGTIKAIKPKKMFLKPQD</sequence>